<accession>P45478</accession>
<accession>A7YWB2</accession>
<keyword id="KW-0002">3D-structure</keyword>
<keyword id="KW-0903">Direct protein sequencing</keyword>
<keyword id="KW-1015">Disulfide bond</keyword>
<keyword id="KW-0256">Endoplasmic reticulum</keyword>
<keyword id="KW-0325">Glycoprotein</keyword>
<keyword id="KW-0333">Golgi apparatus</keyword>
<keyword id="KW-0378">Hydrolase</keyword>
<keyword id="KW-0458">Lysosome</keyword>
<keyword id="KW-1185">Reference proteome</keyword>
<keyword id="KW-0964">Secreted</keyword>
<keyword id="KW-0732">Signal</keyword>
<comment type="function">
    <text evidence="2 4">Has thioesterase activity against fatty acid thioesters with 14 -18 carbons, including palmitoyl-CoA, S-palmitoyl-N-acetylcysteamine, and palmitoylated proteins (PubMed:7916016). In contrast to PPT2, PPT1 can hydrolyze palmitoylated proteins and palmitoylcysteine (By similarity).</text>
</comment>
<comment type="catalytic activity">
    <reaction evidence="4">
        <text>S-hexadecanoyl-L-cysteinyl-[protein] + H2O = L-cysteinyl-[protein] + hexadecanoate + H(+)</text>
        <dbReference type="Rhea" id="RHEA:19233"/>
        <dbReference type="Rhea" id="RHEA-COMP:10131"/>
        <dbReference type="Rhea" id="RHEA-COMP:11032"/>
        <dbReference type="ChEBI" id="CHEBI:7896"/>
        <dbReference type="ChEBI" id="CHEBI:15377"/>
        <dbReference type="ChEBI" id="CHEBI:15378"/>
        <dbReference type="ChEBI" id="CHEBI:29950"/>
        <dbReference type="ChEBI" id="CHEBI:74151"/>
        <dbReference type="EC" id="3.1.2.22"/>
    </reaction>
</comment>
<comment type="catalytic activity">
    <reaction evidence="4">
        <text>hexadecanoyl-CoA + H2O = hexadecanoate + CoA + H(+)</text>
        <dbReference type="Rhea" id="RHEA:16645"/>
        <dbReference type="ChEBI" id="CHEBI:7896"/>
        <dbReference type="ChEBI" id="CHEBI:15377"/>
        <dbReference type="ChEBI" id="CHEBI:15378"/>
        <dbReference type="ChEBI" id="CHEBI:57287"/>
        <dbReference type="ChEBI" id="CHEBI:57379"/>
        <dbReference type="EC" id="3.1.2.2"/>
    </reaction>
    <physiologicalReaction direction="left-to-right" evidence="2">
        <dbReference type="Rhea" id="RHEA:16646"/>
    </physiologicalReaction>
</comment>
<comment type="catalytic activity">
    <reaction evidence="2">
        <text>S-hexadecanoyl-N-acetylcysteamine + H2O = N-acetylcysteamine + hexadecanoate + H(+)</text>
        <dbReference type="Rhea" id="RHEA:84099"/>
        <dbReference type="ChEBI" id="CHEBI:7896"/>
        <dbReference type="ChEBI" id="CHEBI:15377"/>
        <dbReference type="ChEBI" id="CHEBI:15378"/>
        <dbReference type="ChEBI" id="CHEBI:74410"/>
        <dbReference type="ChEBI" id="CHEBI:233601"/>
    </reaction>
</comment>
<comment type="catalytic activity">
    <reaction evidence="2">
        <text>S-hexadecanoyl-N-acetylcysteine methyl ester + H2O = N-acetylcysteine methyl ester + hexadecanoate + H(+)</text>
        <dbReference type="Rhea" id="RHEA:84103"/>
        <dbReference type="ChEBI" id="CHEBI:7896"/>
        <dbReference type="ChEBI" id="CHEBI:15377"/>
        <dbReference type="ChEBI" id="CHEBI:15378"/>
        <dbReference type="ChEBI" id="CHEBI:233604"/>
        <dbReference type="ChEBI" id="CHEBI:233605"/>
    </reaction>
</comment>
<comment type="activity regulation">
    <text evidence="2">Palmitoylation reduces PPT1 enzymatic activity.</text>
</comment>
<comment type="biophysicochemical properties">
    <kinetics>
        <KM evidence="4">5.7 uM for palmitoyl-CoA</KM>
        <KM evidence="4">2.3 uM for stearoyl-CoA</KM>
        <KM evidence="4">2.8 uM for oleoyl-CoA</KM>
        <KM evidence="4">7.5 uM for myristoyl-CoA</KM>
        <Vmax evidence="4">5.7 nmol/min/mg enzyme with palmitoyl-CoA as substrate</Vmax>
        <Vmax evidence="4">1.8 nmol/min/mg enzyme with stearoyl-CoA as substrate</Vmax>
        <Vmax evidence="4">1.7 nmol/min/mg enzyme with oleoyl-CoA as substrate</Vmax>
        <Vmax evidence="4">1.9 nmol/min/mg enzyme with myristoyl-CoA as substrate</Vmax>
    </kinetics>
</comment>
<comment type="subunit">
    <text evidence="1">Interacts with CLN5, ATP5F1A and ATP5F1B.</text>
</comment>
<comment type="subcellular location">
    <subcellularLocation>
        <location evidence="5">Lysosome</location>
    </subcellularLocation>
    <subcellularLocation>
        <location evidence="4">Secreted</location>
    </subcellularLocation>
    <subcellularLocation>
        <location evidence="2">Golgi apparatus</location>
    </subcellularLocation>
    <subcellularLocation>
        <location evidence="2">Endoplasmic reticulum</location>
    </subcellularLocation>
</comment>
<comment type="tissue specificity">
    <text evidence="4">Spleen, brain, seminal vesicle, and testis. Lower levels of activity in liver, heart, lung, and skeletal muscle.</text>
</comment>
<comment type="PTM">
    <text evidence="4">Glycosylated.</text>
</comment>
<comment type="similarity">
    <text evidence="6">Belongs to the palmitoyl-protein thioesterase family.</text>
</comment>
<gene>
    <name type="primary">PPT1</name>
    <name type="synonym">CLN1</name>
    <name type="synonym">PPT</name>
</gene>
<name>PPT1_BOVIN</name>
<feature type="signal peptide" evidence="4">
    <location>
        <begin position="1"/>
        <end position="27"/>
    </location>
</feature>
<feature type="chain" id="PRO_0000025549" description="Palmitoyl-protein thioesterase 1">
    <location>
        <begin position="28"/>
        <end position="306"/>
    </location>
</feature>
<feature type="active site" evidence="3">
    <location>
        <position position="115"/>
    </location>
</feature>
<feature type="active site" evidence="3">
    <location>
        <position position="233"/>
    </location>
</feature>
<feature type="active site" evidence="3">
    <location>
        <position position="289"/>
    </location>
</feature>
<feature type="glycosylation site" description="N-linked (GlcNAc...) asparagine" evidence="2">
    <location>
        <position position="197"/>
    </location>
</feature>
<feature type="glycosylation site" description="N-linked (GlcNAc...) asparagine" evidence="2">
    <location>
        <position position="212"/>
    </location>
</feature>
<feature type="glycosylation site" description="N-linked (GlcNAc...) asparagine" evidence="2">
    <location>
        <position position="232"/>
    </location>
</feature>
<feature type="disulfide bond" evidence="2">
    <location>
        <begin position="45"/>
        <end position="46"/>
    </location>
</feature>
<feature type="disulfide bond" evidence="2">
    <location>
        <begin position="96"/>
        <end position="128"/>
    </location>
</feature>
<feature type="disulfide bond" evidence="2">
    <location>
        <begin position="152"/>
        <end position="160"/>
    </location>
</feature>
<feature type="sequence variant" description="In clone BOVPTT-25.">
    <original>I</original>
    <variation>F</variation>
    <location>
        <position position="72"/>
    </location>
</feature>
<feature type="strand" evidence="7">
    <location>
        <begin position="30"/>
        <end position="32"/>
    </location>
</feature>
<feature type="strand" evidence="8">
    <location>
        <begin position="35"/>
        <end position="38"/>
    </location>
</feature>
<feature type="turn" evidence="8">
    <location>
        <begin position="48"/>
        <end position="51"/>
    </location>
</feature>
<feature type="helix" evidence="8">
    <location>
        <begin position="52"/>
        <end position="61"/>
    </location>
</feature>
<feature type="strand" evidence="8">
    <location>
        <begin position="67"/>
        <end position="69"/>
    </location>
</feature>
<feature type="strand" evidence="8">
    <location>
        <begin position="73"/>
        <end position="75"/>
    </location>
</feature>
<feature type="helix" evidence="8">
    <location>
        <begin position="76"/>
        <end position="85"/>
    </location>
</feature>
<feature type="helix" evidence="8">
    <location>
        <begin position="88"/>
        <end position="100"/>
    </location>
</feature>
<feature type="helix" evidence="8">
    <location>
        <begin position="103"/>
        <end position="105"/>
    </location>
</feature>
<feature type="strand" evidence="8">
    <location>
        <begin position="109"/>
        <end position="114"/>
    </location>
</feature>
<feature type="helix" evidence="8">
    <location>
        <begin position="117"/>
        <end position="127"/>
    </location>
</feature>
<feature type="strand" evidence="8">
    <location>
        <begin position="133"/>
        <end position="140"/>
    </location>
</feature>
<feature type="helix" evidence="8">
    <location>
        <begin position="158"/>
        <end position="166"/>
    </location>
</feature>
<feature type="helix" evidence="8">
    <location>
        <begin position="168"/>
        <end position="171"/>
    </location>
</feature>
<feature type="helix" evidence="8">
    <location>
        <begin position="174"/>
        <end position="179"/>
    </location>
</feature>
<feature type="helix" evidence="8">
    <location>
        <begin position="182"/>
        <end position="185"/>
    </location>
</feature>
<feature type="helix" evidence="8">
    <location>
        <begin position="192"/>
        <end position="198"/>
    </location>
</feature>
<feature type="helix" evidence="8">
    <location>
        <begin position="202"/>
        <end position="205"/>
    </location>
</feature>
<feature type="turn" evidence="8">
    <location>
        <begin position="206"/>
        <end position="209"/>
    </location>
</feature>
<feature type="helix" evidence="8">
    <location>
        <begin position="213"/>
        <end position="220"/>
    </location>
</feature>
<feature type="strand" evidence="8">
    <location>
        <begin position="222"/>
        <end position="230"/>
    </location>
</feature>
<feature type="strand" evidence="8">
    <location>
        <begin position="234"/>
        <end position="238"/>
    </location>
</feature>
<feature type="helix" evidence="8">
    <location>
        <begin position="239"/>
        <end position="243"/>
    </location>
</feature>
<feature type="helix" evidence="8">
    <location>
        <begin position="258"/>
        <end position="260"/>
    </location>
</feature>
<feature type="helix" evidence="8">
    <location>
        <begin position="262"/>
        <end position="265"/>
    </location>
</feature>
<feature type="strand" evidence="8">
    <location>
        <begin position="268"/>
        <end position="270"/>
    </location>
</feature>
<feature type="helix" evidence="8">
    <location>
        <begin position="271"/>
        <end position="276"/>
    </location>
</feature>
<feature type="strand" evidence="8">
    <location>
        <begin position="280"/>
        <end position="288"/>
    </location>
</feature>
<feature type="helix" evidence="8">
    <location>
        <begin position="294"/>
        <end position="300"/>
    </location>
</feature>
<feature type="helix" evidence="8">
    <location>
        <begin position="302"/>
        <end position="304"/>
    </location>
</feature>
<dbReference type="EC" id="3.1.2.2" evidence="2"/>
<dbReference type="EC" id="3.1.2.22" evidence="4"/>
<dbReference type="EMBL" id="L34261">
    <property type="protein sequence ID" value="AAA59357.1"/>
    <property type="molecule type" value="mRNA"/>
</dbReference>
<dbReference type="EMBL" id="BC134479">
    <property type="protein sequence ID" value="AAI34480.1"/>
    <property type="molecule type" value="mRNA"/>
</dbReference>
<dbReference type="PIR" id="B54717">
    <property type="entry name" value="B54717"/>
</dbReference>
<dbReference type="RefSeq" id="NP_776579.1">
    <property type="nucleotide sequence ID" value="NM_174154.2"/>
</dbReference>
<dbReference type="PDB" id="1EH5">
    <property type="method" value="X-ray"/>
    <property type="resolution" value="2.50 A"/>
    <property type="chains" value="A=28-306"/>
</dbReference>
<dbReference type="PDB" id="1EI9">
    <property type="method" value="X-ray"/>
    <property type="resolution" value="2.25 A"/>
    <property type="chains" value="A=28-306"/>
</dbReference>
<dbReference type="PDB" id="1EXW">
    <property type="method" value="X-ray"/>
    <property type="resolution" value="2.40 A"/>
    <property type="chains" value="A=28-306"/>
</dbReference>
<dbReference type="PDBsum" id="1EH5"/>
<dbReference type="PDBsum" id="1EI9"/>
<dbReference type="PDBsum" id="1EXW"/>
<dbReference type="SMR" id="P45478"/>
<dbReference type="FunCoup" id="P45478">
    <property type="interactions" value="2832"/>
</dbReference>
<dbReference type="IntAct" id="P45478">
    <property type="interactions" value="2"/>
</dbReference>
<dbReference type="STRING" id="9913.ENSBTAP00000017780"/>
<dbReference type="ESTHER" id="bovin-ppt">
    <property type="family name" value="Palmitoyl-protein_thioesterase"/>
</dbReference>
<dbReference type="GlyCosmos" id="P45478">
    <property type="glycosylation" value="3 sites, No reported glycans"/>
</dbReference>
<dbReference type="GlyGen" id="P45478">
    <property type="glycosylation" value="3 sites"/>
</dbReference>
<dbReference type="PaxDb" id="9913-ENSBTAP00000017780"/>
<dbReference type="GeneID" id="281421"/>
<dbReference type="KEGG" id="bta:281421"/>
<dbReference type="CTD" id="5538"/>
<dbReference type="eggNOG" id="KOG2541">
    <property type="taxonomic scope" value="Eukaryota"/>
</dbReference>
<dbReference type="InParanoid" id="P45478"/>
<dbReference type="OrthoDB" id="10263094at2759"/>
<dbReference type="SABIO-RK" id="P45478"/>
<dbReference type="EvolutionaryTrace" id="P45478"/>
<dbReference type="Proteomes" id="UP000009136">
    <property type="component" value="Unplaced"/>
</dbReference>
<dbReference type="GO" id="GO:0030424">
    <property type="term" value="C:axon"/>
    <property type="evidence" value="ECO:0000250"/>
    <property type="project" value="UniProtKB"/>
</dbReference>
<dbReference type="GO" id="GO:0005829">
    <property type="term" value="C:cytosol"/>
    <property type="evidence" value="ECO:0000314"/>
    <property type="project" value="UniProtKB"/>
</dbReference>
<dbReference type="GO" id="GO:0005576">
    <property type="term" value="C:extracellular region"/>
    <property type="evidence" value="ECO:0000314"/>
    <property type="project" value="UniProtKB"/>
</dbReference>
<dbReference type="GO" id="GO:0005794">
    <property type="term" value="C:Golgi apparatus"/>
    <property type="evidence" value="ECO:0000250"/>
    <property type="project" value="UniProtKB"/>
</dbReference>
<dbReference type="GO" id="GO:0005764">
    <property type="term" value="C:lysosome"/>
    <property type="evidence" value="ECO:0000314"/>
    <property type="project" value="UniProtKB"/>
</dbReference>
<dbReference type="GO" id="GO:0045121">
    <property type="term" value="C:membrane raft"/>
    <property type="evidence" value="ECO:0000250"/>
    <property type="project" value="UniProtKB"/>
</dbReference>
<dbReference type="GO" id="GO:0005634">
    <property type="term" value="C:nucleus"/>
    <property type="evidence" value="ECO:0000250"/>
    <property type="project" value="UniProtKB"/>
</dbReference>
<dbReference type="GO" id="GO:0008021">
    <property type="term" value="C:synaptic vesicle"/>
    <property type="evidence" value="ECO:0000250"/>
    <property type="project" value="UniProtKB"/>
</dbReference>
<dbReference type="GO" id="GO:0052816">
    <property type="term" value="F:long-chain fatty acyl-CoA hydrolase activity"/>
    <property type="evidence" value="ECO:0000314"/>
    <property type="project" value="UniProtKB"/>
</dbReference>
<dbReference type="GO" id="GO:0008474">
    <property type="term" value="F:palmitoyl-(protein) hydrolase activity"/>
    <property type="evidence" value="ECO:0000314"/>
    <property type="project" value="UniProtKB"/>
</dbReference>
<dbReference type="GO" id="GO:0120146">
    <property type="term" value="F:sulfatide binding"/>
    <property type="evidence" value="ECO:0000250"/>
    <property type="project" value="UniProtKB"/>
</dbReference>
<dbReference type="GO" id="GO:0007420">
    <property type="term" value="P:brain development"/>
    <property type="evidence" value="ECO:0000250"/>
    <property type="project" value="UniProtKB"/>
</dbReference>
<dbReference type="GO" id="GO:0006897">
    <property type="term" value="P:endocytosis"/>
    <property type="evidence" value="ECO:0000318"/>
    <property type="project" value="GO_Central"/>
</dbReference>
<dbReference type="GO" id="GO:0016042">
    <property type="term" value="P:lipid catabolic process"/>
    <property type="evidence" value="ECO:0000250"/>
    <property type="project" value="UniProtKB"/>
</dbReference>
<dbReference type="GO" id="GO:0007042">
    <property type="term" value="P:lysosomal lumen acidification"/>
    <property type="evidence" value="ECO:0000250"/>
    <property type="project" value="UniProtKB"/>
</dbReference>
<dbReference type="GO" id="GO:0031579">
    <property type="term" value="P:membrane raft organization"/>
    <property type="evidence" value="ECO:0000250"/>
    <property type="project" value="UniProtKB"/>
</dbReference>
<dbReference type="GO" id="GO:0043066">
    <property type="term" value="P:negative regulation of apoptotic process"/>
    <property type="evidence" value="ECO:0000250"/>
    <property type="project" value="UniProtKB"/>
</dbReference>
<dbReference type="GO" id="GO:0030308">
    <property type="term" value="P:negative regulation of cell growth"/>
    <property type="evidence" value="ECO:0000250"/>
    <property type="project" value="UniProtKB"/>
</dbReference>
<dbReference type="GO" id="GO:0043524">
    <property type="term" value="P:negative regulation of neuron apoptotic process"/>
    <property type="evidence" value="ECO:0000250"/>
    <property type="project" value="UniProtKB"/>
</dbReference>
<dbReference type="GO" id="GO:0007399">
    <property type="term" value="P:nervous system development"/>
    <property type="evidence" value="ECO:0000250"/>
    <property type="project" value="UniProtKB"/>
</dbReference>
<dbReference type="GO" id="GO:0006907">
    <property type="term" value="P:pinocytosis"/>
    <property type="evidence" value="ECO:0000250"/>
    <property type="project" value="AgBase"/>
</dbReference>
<dbReference type="GO" id="GO:0048549">
    <property type="term" value="P:positive regulation of pinocytosis"/>
    <property type="evidence" value="ECO:0000250"/>
    <property type="project" value="UniProtKB"/>
</dbReference>
<dbReference type="GO" id="GO:0048260">
    <property type="term" value="P:positive regulation of receptor-mediated endocytosis"/>
    <property type="evidence" value="ECO:0000250"/>
    <property type="project" value="UniProtKB"/>
</dbReference>
<dbReference type="GO" id="GO:0002084">
    <property type="term" value="P:protein depalmitoylation"/>
    <property type="evidence" value="ECO:0000314"/>
    <property type="project" value="UniProtKB"/>
</dbReference>
<dbReference type="GO" id="GO:0015031">
    <property type="term" value="P:protein transport"/>
    <property type="evidence" value="ECO:0000250"/>
    <property type="project" value="UniProtKB"/>
</dbReference>
<dbReference type="GO" id="GO:0006898">
    <property type="term" value="P:receptor-mediated endocytosis"/>
    <property type="evidence" value="ECO:0000250"/>
    <property type="project" value="AgBase"/>
</dbReference>
<dbReference type="FunFam" id="3.40.50.1820:FF:000098">
    <property type="entry name" value="palmitoyl-protein thioesterase 1"/>
    <property type="match status" value="1"/>
</dbReference>
<dbReference type="Gene3D" id="3.40.50.1820">
    <property type="entry name" value="alpha/beta hydrolase"/>
    <property type="match status" value="1"/>
</dbReference>
<dbReference type="InterPro" id="IPR029058">
    <property type="entry name" value="AB_hydrolase_fold"/>
</dbReference>
<dbReference type="InterPro" id="IPR002472">
    <property type="entry name" value="Palm_thioest"/>
</dbReference>
<dbReference type="PANTHER" id="PTHR11247:SF8">
    <property type="entry name" value="PALMITOYL-PROTEIN THIOESTERASE 1"/>
    <property type="match status" value="1"/>
</dbReference>
<dbReference type="PANTHER" id="PTHR11247">
    <property type="entry name" value="PALMITOYL-PROTEIN THIOESTERASE/DOLICHYLDIPHOSPHATASE 1"/>
    <property type="match status" value="1"/>
</dbReference>
<dbReference type="Pfam" id="PF02089">
    <property type="entry name" value="Palm_thioest"/>
    <property type="match status" value="1"/>
</dbReference>
<dbReference type="PRINTS" id="PR00414">
    <property type="entry name" value="PPTHIESTRASE"/>
</dbReference>
<dbReference type="SUPFAM" id="SSF53474">
    <property type="entry name" value="alpha/beta-Hydrolases"/>
    <property type="match status" value="1"/>
</dbReference>
<reference key="1">
    <citation type="journal article" date="1994" name="J. Biol. Chem.">
        <title>Molecular cloning and expression of palmitoyl-protein thioesterase.</title>
        <authorList>
            <person name="Camp L.A."/>
            <person name="Verkruyse L.A."/>
            <person name="Afendis S.J."/>
            <person name="Slaughter C.A."/>
            <person name="Hofmann S.L."/>
        </authorList>
    </citation>
    <scope>NUCLEOTIDE SEQUENCE [MRNA]</scope>
    <scope>PROTEIN SEQUENCE OF N-TERMINUS</scope>
    <scope>PARTIAL PROTEIN SEQUENCE</scope>
    <scope>FUNCTION</scope>
    <scope>BIOPHYSICOCHEMICAL PROPERTIES</scope>
    <scope>CATALYTIC ACTIVITY</scope>
    <scope>SUBCELLULAR LOCATION</scope>
    <scope>TISSUE SPECIFICITY</scope>
    <scope>GLYCOSYLATION</scope>
    <source>
        <tissue>Brain</tissue>
    </source>
</reference>
<reference key="2">
    <citation type="submission" date="2007-03" db="EMBL/GenBank/DDBJ databases">
        <authorList>
            <consortium name="NIH - Mammalian Gene Collection (MGC) project"/>
        </authorList>
    </citation>
    <scope>NUCLEOTIDE SEQUENCE [LARGE SCALE MRNA]</scope>
    <source>
        <strain>Hereford</strain>
        <tissue>Ascending colon</tissue>
    </source>
</reference>
<reference key="3">
    <citation type="journal article" date="1996" name="J. Biol. Chem.">
        <title>Lysosomal targeting of palmitoyl-protein thioesterase.</title>
        <authorList>
            <person name="Verkruyse L.A."/>
            <person name="Hofmann S.L."/>
        </authorList>
    </citation>
    <scope>SUBCELLULAR LOCATION</scope>
</reference>
<reference key="4">
    <citation type="journal article" date="2000" name="Proc. Natl. Acad. Sci. U.S.A.">
        <title>The crystal structure of palmitoyl protein thioesterase 1 and the molecular basis of infantile neuronal ceroid lipofuscinosis.</title>
        <authorList>
            <person name="Bellizzi J.J. III"/>
            <person name="Widom J."/>
            <person name="Kemp C."/>
            <person name="Lu J.Y."/>
            <person name="Das A.K."/>
            <person name="Hofmann S.L."/>
            <person name="Clardy J."/>
        </authorList>
    </citation>
    <scope>X-RAY CRYSTALLOGRAPHY (2.5 ANGSTROMS)</scope>
    <scope>ACTIVE SITE</scope>
</reference>
<sequence length="306" mass="34142">MASSSCLWLLALAFLLGSCASLALGHLDPPAPLPLVIWHGMGDSCCNPLSMGAIKKMVEKKIPGIHVLSLEIGKTLREDVENSFFLNVNSQVTTVCQILAKDPKLQQGYNAMGFSQGGQFLRAVAQRCPSPPMVNLISVGGQHQGVFGLPRCPGESSHICDFIRKTLNAGAYNKAIQERLVQAEYWHDPIREDIYRNHSIFLADINQERGVNESYKKNLMALKKFVMVKFLNDTIVDPVDSEWFGFYRSGQAKETIPLQESTLYTQDRLGLKAMDKAGQLVFLALEGDHLQLSEEWFYAHIIPFLE</sequence>
<proteinExistence type="evidence at protein level"/>
<protein>
    <recommendedName>
        <fullName>Palmitoyl-protein thioesterase 1</fullName>
        <shortName>PPT-1</shortName>
        <ecNumber evidence="2">3.1.2.2</ecNumber>
        <ecNumber evidence="4">3.1.2.22</ecNumber>
    </recommendedName>
    <alternativeName>
        <fullName>Palmitoyl-protein hydrolase 1</fullName>
    </alternativeName>
</protein>
<organism>
    <name type="scientific">Bos taurus</name>
    <name type="common">Bovine</name>
    <dbReference type="NCBI Taxonomy" id="9913"/>
    <lineage>
        <taxon>Eukaryota</taxon>
        <taxon>Metazoa</taxon>
        <taxon>Chordata</taxon>
        <taxon>Craniata</taxon>
        <taxon>Vertebrata</taxon>
        <taxon>Euteleostomi</taxon>
        <taxon>Mammalia</taxon>
        <taxon>Eutheria</taxon>
        <taxon>Laurasiatheria</taxon>
        <taxon>Artiodactyla</taxon>
        <taxon>Ruminantia</taxon>
        <taxon>Pecora</taxon>
        <taxon>Bovidae</taxon>
        <taxon>Bovinae</taxon>
        <taxon>Bos</taxon>
    </lineage>
</organism>
<evidence type="ECO:0000250" key="1">
    <source>
        <dbReference type="UniProtKB" id="O88531"/>
    </source>
</evidence>
<evidence type="ECO:0000250" key="2">
    <source>
        <dbReference type="UniProtKB" id="P50897"/>
    </source>
</evidence>
<evidence type="ECO:0000269" key="3">
    <source>
    </source>
</evidence>
<evidence type="ECO:0000269" key="4">
    <source>
    </source>
</evidence>
<evidence type="ECO:0000269" key="5">
    <source>
    </source>
</evidence>
<evidence type="ECO:0000305" key="6"/>
<evidence type="ECO:0007829" key="7">
    <source>
        <dbReference type="PDB" id="1EH5"/>
    </source>
</evidence>
<evidence type="ECO:0007829" key="8">
    <source>
        <dbReference type="PDB" id="1EI9"/>
    </source>
</evidence>